<evidence type="ECO:0000255" key="1">
    <source>
        <dbReference type="HAMAP-Rule" id="MF_00624"/>
    </source>
</evidence>
<feature type="chain" id="PRO_0000195302" description="Glucose-1-phosphate adenylyltransferase">
    <location>
        <begin position="1"/>
        <end position="379"/>
    </location>
</feature>
<feature type="binding site" evidence="1">
    <location>
        <position position="164"/>
    </location>
    <ligand>
        <name>alpha-D-glucose 1-phosphate</name>
        <dbReference type="ChEBI" id="CHEBI:58601"/>
    </ligand>
</feature>
<feature type="binding site" evidence="1">
    <location>
        <begin position="179"/>
        <end position="180"/>
    </location>
    <ligand>
        <name>alpha-D-glucose 1-phosphate</name>
        <dbReference type="ChEBI" id="CHEBI:58601"/>
    </ligand>
</feature>
<feature type="binding site" evidence="1">
    <location>
        <position position="190"/>
    </location>
    <ligand>
        <name>alpha-D-glucose 1-phosphate</name>
        <dbReference type="ChEBI" id="CHEBI:58601"/>
    </ligand>
</feature>
<comment type="function">
    <text evidence="1">Involved in the biosynthesis of ADP-glucose, a building block required for the elongation reactions to produce glycogen. Catalyzes the reaction between ATP and alpha-D-glucose 1-phosphate (G1P) to produce pyrophosphate and ADP-Glc.</text>
</comment>
<comment type="catalytic activity">
    <reaction evidence="1">
        <text>alpha-D-glucose 1-phosphate + ATP + H(+) = ADP-alpha-D-glucose + diphosphate</text>
        <dbReference type="Rhea" id="RHEA:12120"/>
        <dbReference type="ChEBI" id="CHEBI:15378"/>
        <dbReference type="ChEBI" id="CHEBI:30616"/>
        <dbReference type="ChEBI" id="CHEBI:33019"/>
        <dbReference type="ChEBI" id="CHEBI:57498"/>
        <dbReference type="ChEBI" id="CHEBI:58601"/>
        <dbReference type="EC" id="2.7.7.27"/>
    </reaction>
</comment>
<comment type="pathway">
    <text evidence="1">Glycan biosynthesis; glycogen biosynthesis.</text>
</comment>
<comment type="subunit">
    <text evidence="1">Homotetramer.</text>
</comment>
<comment type="similarity">
    <text evidence="1">Belongs to the bacterial/plant glucose-1-phosphate adenylyltransferase family.</text>
</comment>
<organism>
    <name type="scientific">Lactiplantibacillus plantarum (strain ATCC BAA-793 / NCIMB 8826 / WCFS1)</name>
    <name type="common">Lactobacillus plantarum</name>
    <dbReference type="NCBI Taxonomy" id="220668"/>
    <lineage>
        <taxon>Bacteria</taxon>
        <taxon>Bacillati</taxon>
        <taxon>Bacillota</taxon>
        <taxon>Bacilli</taxon>
        <taxon>Lactobacillales</taxon>
        <taxon>Lactobacillaceae</taxon>
        <taxon>Lactiplantibacillus</taxon>
    </lineage>
</organism>
<proteinExistence type="inferred from homology"/>
<name>GLGC_LACPL</name>
<keyword id="KW-0067">ATP-binding</keyword>
<keyword id="KW-0119">Carbohydrate metabolism</keyword>
<keyword id="KW-0320">Glycogen biosynthesis</keyword>
<keyword id="KW-0321">Glycogen metabolism</keyword>
<keyword id="KW-0547">Nucleotide-binding</keyword>
<keyword id="KW-0548">Nucleotidyltransferase</keyword>
<keyword id="KW-1185">Reference proteome</keyword>
<keyword id="KW-0808">Transferase</keyword>
<dbReference type="EC" id="2.7.7.27" evidence="1"/>
<dbReference type="EMBL" id="AL935263">
    <property type="protein sequence ID" value="CCC77597.1"/>
    <property type="molecule type" value="Genomic_DNA"/>
</dbReference>
<dbReference type="RefSeq" id="WP_003641645.1">
    <property type="nucleotide sequence ID" value="NC_004567.2"/>
</dbReference>
<dbReference type="RefSeq" id="YP_004888111.1">
    <property type="nucleotide sequence ID" value="NC_004567.2"/>
</dbReference>
<dbReference type="SMR" id="Q890J0"/>
<dbReference type="STRING" id="220668.lp_0021"/>
<dbReference type="EnsemblBacteria" id="CCC77597">
    <property type="protein sequence ID" value="CCC77597"/>
    <property type="gene ID" value="lp_0021"/>
</dbReference>
<dbReference type="KEGG" id="lpl:lp_0021"/>
<dbReference type="PATRIC" id="fig|220668.9.peg.19"/>
<dbReference type="eggNOG" id="COG0448">
    <property type="taxonomic scope" value="Bacteria"/>
</dbReference>
<dbReference type="HOGENOM" id="CLU_029499_14_0_9"/>
<dbReference type="OrthoDB" id="9801810at2"/>
<dbReference type="PhylomeDB" id="Q890J0"/>
<dbReference type="UniPathway" id="UPA00164"/>
<dbReference type="Proteomes" id="UP000000432">
    <property type="component" value="Chromosome"/>
</dbReference>
<dbReference type="GO" id="GO:0005524">
    <property type="term" value="F:ATP binding"/>
    <property type="evidence" value="ECO:0007669"/>
    <property type="project" value="UniProtKB-KW"/>
</dbReference>
<dbReference type="GO" id="GO:0008878">
    <property type="term" value="F:glucose-1-phosphate adenylyltransferase activity"/>
    <property type="evidence" value="ECO:0007669"/>
    <property type="project" value="UniProtKB-UniRule"/>
</dbReference>
<dbReference type="GO" id="GO:0005978">
    <property type="term" value="P:glycogen biosynthetic process"/>
    <property type="evidence" value="ECO:0007669"/>
    <property type="project" value="UniProtKB-UniRule"/>
</dbReference>
<dbReference type="CDD" id="cd02508">
    <property type="entry name" value="ADP_Glucose_PP"/>
    <property type="match status" value="1"/>
</dbReference>
<dbReference type="CDD" id="cd04651">
    <property type="entry name" value="LbH_G1P_AT_C"/>
    <property type="match status" value="1"/>
</dbReference>
<dbReference type="Gene3D" id="2.160.10.10">
    <property type="entry name" value="Hexapeptide repeat proteins"/>
    <property type="match status" value="1"/>
</dbReference>
<dbReference type="Gene3D" id="3.90.550.10">
    <property type="entry name" value="Spore Coat Polysaccharide Biosynthesis Protein SpsA, Chain A"/>
    <property type="match status" value="1"/>
</dbReference>
<dbReference type="HAMAP" id="MF_00624">
    <property type="entry name" value="GlgC"/>
    <property type="match status" value="1"/>
</dbReference>
<dbReference type="InterPro" id="IPR011831">
    <property type="entry name" value="ADP-Glc_PPase"/>
</dbReference>
<dbReference type="InterPro" id="IPR005836">
    <property type="entry name" value="ADP_Glu_pyroP_CS"/>
</dbReference>
<dbReference type="InterPro" id="IPR023049">
    <property type="entry name" value="GlgC_bac"/>
</dbReference>
<dbReference type="InterPro" id="IPR056818">
    <property type="entry name" value="GlmU/GlgC-like_hexapep"/>
</dbReference>
<dbReference type="InterPro" id="IPR005835">
    <property type="entry name" value="NTP_transferase_dom"/>
</dbReference>
<dbReference type="InterPro" id="IPR029044">
    <property type="entry name" value="Nucleotide-diphossugar_trans"/>
</dbReference>
<dbReference type="InterPro" id="IPR011004">
    <property type="entry name" value="Trimer_LpxA-like_sf"/>
</dbReference>
<dbReference type="NCBIfam" id="TIGR02091">
    <property type="entry name" value="glgC"/>
    <property type="match status" value="1"/>
</dbReference>
<dbReference type="NCBIfam" id="NF003670">
    <property type="entry name" value="PRK05293.1"/>
    <property type="match status" value="1"/>
</dbReference>
<dbReference type="PANTHER" id="PTHR43523:SF2">
    <property type="entry name" value="GLUCOSE-1-PHOSPHATE ADENYLYLTRANSFERASE"/>
    <property type="match status" value="1"/>
</dbReference>
<dbReference type="PANTHER" id="PTHR43523">
    <property type="entry name" value="GLUCOSE-1-PHOSPHATE ADENYLYLTRANSFERASE-RELATED"/>
    <property type="match status" value="1"/>
</dbReference>
<dbReference type="Pfam" id="PF24894">
    <property type="entry name" value="Hexapep_GlmU"/>
    <property type="match status" value="1"/>
</dbReference>
<dbReference type="Pfam" id="PF00483">
    <property type="entry name" value="NTP_transferase"/>
    <property type="match status" value="1"/>
</dbReference>
<dbReference type="SUPFAM" id="SSF53448">
    <property type="entry name" value="Nucleotide-diphospho-sugar transferases"/>
    <property type="match status" value="1"/>
</dbReference>
<dbReference type="SUPFAM" id="SSF51161">
    <property type="entry name" value="Trimeric LpxA-like enzymes"/>
    <property type="match status" value="1"/>
</dbReference>
<dbReference type="PROSITE" id="PS00808">
    <property type="entry name" value="ADP_GLC_PYROPHOSPH_1"/>
    <property type="match status" value="1"/>
</dbReference>
<dbReference type="PROSITE" id="PS00810">
    <property type="entry name" value="ADP_GLC_PYROPHOSPH_3"/>
    <property type="match status" value="1"/>
</dbReference>
<sequence length="379" mass="42044">MQDEMLGIILAGGQGTRLGKLTKDTAKPAVPFGGRYRIIDFTLSNCANSGVNTVGVITQYQPLELNAHIGSGASWGFDSLNGGVTVLQPYSSSEGEKFFQGTAHAIYQNIEYIDQQDPKYLLVLSGDHIYKMDYDAMLKYHQEKKASLTVGVIHVTNEEAKRFGMMNTDATDRIIEFEEKPEHPKSDKASMGIYIFNWPTLRDYLVKSYATDKSLEDFGKNVIPSYLANNESVYAYAFKGYWRDVGTIKSLWQANMEFLSPHNRLNIGDRYWRIYSKAEVLPPMFLTETSQVNNAMVVDSCYVAGEIDHSILSQRVSVGMGSRVVDSMIMPGATIGKNVVIDHALIGEDAVIGDDAQIIGTTDKIAVVGYHETMGVEQP</sequence>
<reference key="1">
    <citation type="journal article" date="2003" name="Proc. Natl. Acad. Sci. U.S.A.">
        <title>Complete genome sequence of Lactobacillus plantarum WCFS1.</title>
        <authorList>
            <person name="Kleerebezem M."/>
            <person name="Boekhorst J."/>
            <person name="van Kranenburg R."/>
            <person name="Molenaar D."/>
            <person name="Kuipers O.P."/>
            <person name="Leer R."/>
            <person name="Tarchini R."/>
            <person name="Peters S.A."/>
            <person name="Sandbrink H.M."/>
            <person name="Fiers M.W.E.J."/>
            <person name="Stiekema W."/>
            <person name="Klein Lankhorst R.M."/>
            <person name="Bron P.A."/>
            <person name="Hoffer S.M."/>
            <person name="Nierop Groot M.N."/>
            <person name="Kerkhoven R."/>
            <person name="De Vries M."/>
            <person name="Ursing B."/>
            <person name="De Vos W.M."/>
            <person name="Siezen R.J."/>
        </authorList>
    </citation>
    <scope>NUCLEOTIDE SEQUENCE [LARGE SCALE GENOMIC DNA]</scope>
    <source>
        <strain>ATCC BAA-793 / NCIMB 8826 / WCFS1</strain>
    </source>
</reference>
<reference key="2">
    <citation type="journal article" date="2012" name="J. Bacteriol.">
        <title>Complete resequencing and reannotation of the Lactobacillus plantarum WCFS1 genome.</title>
        <authorList>
            <person name="Siezen R.J."/>
            <person name="Francke C."/>
            <person name="Renckens B."/>
            <person name="Boekhorst J."/>
            <person name="Wels M."/>
            <person name="Kleerebezem M."/>
            <person name="van Hijum S.A."/>
        </authorList>
    </citation>
    <scope>NUCLEOTIDE SEQUENCE [LARGE SCALE GENOMIC DNA]</scope>
    <scope>GENOME REANNOTATION</scope>
    <source>
        <strain>ATCC BAA-793 / NCIMB 8826 / WCFS1</strain>
    </source>
</reference>
<accession>Q890J0</accession>
<accession>F9US50</accession>
<gene>
    <name evidence="1" type="primary">glgC</name>
    <name type="ordered locus">lp_0021</name>
</gene>
<protein>
    <recommendedName>
        <fullName evidence="1">Glucose-1-phosphate adenylyltransferase</fullName>
        <ecNumber evidence="1">2.7.7.27</ecNumber>
    </recommendedName>
    <alternativeName>
        <fullName evidence="1">ADP-glucose pyrophosphorylase</fullName>
        <shortName evidence="1">ADPGlc PPase</shortName>
    </alternativeName>
    <alternativeName>
        <fullName evidence="1">ADP-glucose synthase</fullName>
    </alternativeName>
</protein>